<gene>
    <name evidence="1" type="primary">uxuA</name>
    <name type="ordered locus">SCH_3076</name>
</gene>
<organism>
    <name type="scientific">Salmonella choleraesuis (strain SC-B67)</name>
    <dbReference type="NCBI Taxonomy" id="321314"/>
    <lineage>
        <taxon>Bacteria</taxon>
        <taxon>Pseudomonadati</taxon>
        <taxon>Pseudomonadota</taxon>
        <taxon>Gammaproteobacteria</taxon>
        <taxon>Enterobacterales</taxon>
        <taxon>Enterobacteriaceae</taxon>
        <taxon>Salmonella</taxon>
    </lineage>
</organism>
<feature type="chain" id="PRO_0000231054" description="Mannonate dehydratase">
    <location>
        <begin position="1"/>
        <end position="394"/>
    </location>
</feature>
<comment type="function">
    <text evidence="1">Catalyzes the dehydration of D-mannonate.</text>
</comment>
<comment type="catalytic activity">
    <reaction evidence="1">
        <text>D-mannonate = 2-dehydro-3-deoxy-D-gluconate + H2O</text>
        <dbReference type="Rhea" id="RHEA:20097"/>
        <dbReference type="ChEBI" id="CHEBI:15377"/>
        <dbReference type="ChEBI" id="CHEBI:17767"/>
        <dbReference type="ChEBI" id="CHEBI:57990"/>
        <dbReference type="EC" id="4.2.1.8"/>
    </reaction>
</comment>
<comment type="cofactor">
    <cofactor evidence="1">
        <name>Fe(2+)</name>
        <dbReference type="ChEBI" id="CHEBI:29033"/>
    </cofactor>
    <cofactor evidence="1">
        <name>Mn(2+)</name>
        <dbReference type="ChEBI" id="CHEBI:29035"/>
    </cofactor>
</comment>
<comment type="pathway">
    <text evidence="1">Carbohydrate metabolism; pentose and glucuronate interconversion.</text>
</comment>
<comment type="similarity">
    <text evidence="1">Belongs to the mannonate dehydratase family.</text>
</comment>
<comment type="sequence caution" evidence="2">
    <conflict type="erroneous initiation">
        <sequence resource="EMBL-CDS" id="AAX66982"/>
    </conflict>
</comment>
<keyword id="KW-0408">Iron</keyword>
<keyword id="KW-0456">Lyase</keyword>
<keyword id="KW-0464">Manganese</keyword>
<dbReference type="EC" id="4.2.1.8" evidence="1"/>
<dbReference type="EMBL" id="AE017220">
    <property type="protein sequence ID" value="AAX66982.1"/>
    <property type="status" value="ALT_INIT"/>
    <property type="molecule type" value="Genomic_DNA"/>
</dbReference>
<dbReference type="RefSeq" id="WP_000815487.1">
    <property type="nucleotide sequence ID" value="NC_006905.1"/>
</dbReference>
<dbReference type="SMR" id="Q57JY0"/>
<dbReference type="KEGG" id="sec:SCH_3076"/>
<dbReference type="HOGENOM" id="CLU_058621_2_0_6"/>
<dbReference type="UniPathway" id="UPA00246"/>
<dbReference type="Proteomes" id="UP000000538">
    <property type="component" value="Chromosome"/>
</dbReference>
<dbReference type="GO" id="GO:0008198">
    <property type="term" value="F:ferrous iron binding"/>
    <property type="evidence" value="ECO:0007669"/>
    <property type="project" value="TreeGrafter"/>
</dbReference>
<dbReference type="GO" id="GO:0030145">
    <property type="term" value="F:manganese ion binding"/>
    <property type="evidence" value="ECO:0007669"/>
    <property type="project" value="TreeGrafter"/>
</dbReference>
<dbReference type="GO" id="GO:0008927">
    <property type="term" value="F:mannonate dehydratase activity"/>
    <property type="evidence" value="ECO:0007669"/>
    <property type="project" value="UniProtKB-UniRule"/>
</dbReference>
<dbReference type="GO" id="GO:0042840">
    <property type="term" value="P:D-glucuronate catabolic process"/>
    <property type="evidence" value="ECO:0007669"/>
    <property type="project" value="TreeGrafter"/>
</dbReference>
<dbReference type="FunFam" id="3.20.20.150:FF:000004">
    <property type="entry name" value="Mannonate dehydratase"/>
    <property type="match status" value="1"/>
</dbReference>
<dbReference type="FunFam" id="3.20.20.150:FF:000005">
    <property type="entry name" value="Mannonate dehydratase"/>
    <property type="match status" value="1"/>
</dbReference>
<dbReference type="Gene3D" id="3.20.20.150">
    <property type="entry name" value="Divalent-metal-dependent TIM barrel enzymes"/>
    <property type="match status" value="2"/>
</dbReference>
<dbReference type="HAMAP" id="MF_00106">
    <property type="entry name" value="UxuA"/>
    <property type="match status" value="1"/>
</dbReference>
<dbReference type="InterPro" id="IPR004628">
    <property type="entry name" value="Man_deHydtase"/>
</dbReference>
<dbReference type="InterPro" id="IPR036237">
    <property type="entry name" value="Xyl_isomerase-like_sf"/>
</dbReference>
<dbReference type="NCBIfam" id="NF003027">
    <property type="entry name" value="PRK03906.1"/>
    <property type="match status" value="1"/>
</dbReference>
<dbReference type="NCBIfam" id="TIGR00695">
    <property type="entry name" value="uxuA"/>
    <property type="match status" value="1"/>
</dbReference>
<dbReference type="PANTHER" id="PTHR30387">
    <property type="entry name" value="MANNONATE DEHYDRATASE"/>
    <property type="match status" value="1"/>
</dbReference>
<dbReference type="PANTHER" id="PTHR30387:SF2">
    <property type="entry name" value="MANNONATE DEHYDRATASE"/>
    <property type="match status" value="1"/>
</dbReference>
<dbReference type="Pfam" id="PF03786">
    <property type="entry name" value="UxuA"/>
    <property type="match status" value="1"/>
</dbReference>
<dbReference type="PIRSF" id="PIRSF016049">
    <property type="entry name" value="Man_dehyd"/>
    <property type="match status" value="1"/>
</dbReference>
<dbReference type="SUPFAM" id="SSF51658">
    <property type="entry name" value="Xylose isomerase-like"/>
    <property type="match status" value="1"/>
</dbReference>
<name>UXUA_SALCH</name>
<sequence length="394" mass="44937">MKQTWRWYGPNDPVTLSDVRQAGATGVVTALHHIPNGEIWSVDEIQKRKAIVEEAGLEWSVVESVPIHEDIKTHTGQYDLWIKNYQQTLRNLAQCGIYTVCYNFMPVLDWTRTDLEYVLPDGSKALRFDQIEFAAFELHILKRPGAEADYTAEEIAQAERRFATMSEEDKARLTRNIIAGLPGAEEGYTLDQFRQHLATYKDIDKAKLREHFAYFLKAIIPVADEVGVRMAVHPDDPPRPILGLPRIVSTIEDMQWMVETVNSMANGFTMCTGSYGVRADNDLVDMIKQFGPRIYFTHLRSTLREENPKTFHEAAHLHGDVDMYEVVKAIVEEEHRRKAEGSDDLIPMRPDHGHQMLDDLKKKTNPGYSAIGRLKGLAEVRGVELAIQRAFFSK</sequence>
<reference key="1">
    <citation type="journal article" date="2005" name="Nucleic Acids Res.">
        <title>The genome sequence of Salmonella enterica serovar Choleraesuis, a highly invasive and resistant zoonotic pathogen.</title>
        <authorList>
            <person name="Chiu C.-H."/>
            <person name="Tang P."/>
            <person name="Chu C."/>
            <person name="Hu S."/>
            <person name="Bao Q."/>
            <person name="Yu J."/>
            <person name="Chou Y.-Y."/>
            <person name="Wang H.-S."/>
            <person name="Lee Y.-S."/>
        </authorList>
    </citation>
    <scope>NUCLEOTIDE SEQUENCE [LARGE SCALE GENOMIC DNA]</scope>
    <source>
        <strain>SC-B67</strain>
    </source>
</reference>
<proteinExistence type="inferred from homology"/>
<accession>Q57JY0</accession>
<protein>
    <recommendedName>
        <fullName evidence="1">Mannonate dehydratase</fullName>
        <ecNumber evidence="1">4.2.1.8</ecNumber>
    </recommendedName>
    <alternativeName>
        <fullName evidence="1">D-mannonate hydro-lyase</fullName>
    </alternativeName>
</protein>
<evidence type="ECO:0000255" key="1">
    <source>
        <dbReference type="HAMAP-Rule" id="MF_00106"/>
    </source>
</evidence>
<evidence type="ECO:0000305" key="2"/>